<name>BETA_ECO8A</name>
<dbReference type="EC" id="1.1.99.1" evidence="1"/>
<dbReference type="EC" id="1.2.1.8" evidence="1"/>
<dbReference type="EMBL" id="CU928160">
    <property type="protein sequence ID" value="CAQ97182.1"/>
    <property type="molecule type" value="Genomic_DNA"/>
</dbReference>
<dbReference type="RefSeq" id="WP_001159102.1">
    <property type="nucleotide sequence ID" value="NC_011741.1"/>
</dbReference>
<dbReference type="SMR" id="B7M2V5"/>
<dbReference type="GeneID" id="75206487"/>
<dbReference type="KEGG" id="ecr:ECIAI1_0308"/>
<dbReference type="HOGENOM" id="CLU_002865_7_1_6"/>
<dbReference type="UniPathway" id="UPA00529">
    <property type="reaction ID" value="UER00385"/>
</dbReference>
<dbReference type="GO" id="GO:0016020">
    <property type="term" value="C:membrane"/>
    <property type="evidence" value="ECO:0007669"/>
    <property type="project" value="TreeGrafter"/>
</dbReference>
<dbReference type="GO" id="GO:0008802">
    <property type="term" value="F:betaine-aldehyde dehydrogenase (NAD+) activity"/>
    <property type="evidence" value="ECO:0007669"/>
    <property type="project" value="UniProtKB-EC"/>
</dbReference>
<dbReference type="GO" id="GO:0008812">
    <property type="term" value="F:choline dehydrogenase activity"/>
    <property type="evidence" value="ECO:0007669"/>
    <property type="project" value="UniProtKB-UniRule"/>
</dbReference>
<dbReference type="GO" id="GO:0050660">
    <property type="term" value="F:flavin adenine dinucleotide binding"/>
    <property type="evidence" value="ECO:0007669"/>
    <property type="project" value="InterPro"/>
</dbReference>
<dbReference type="GO" id="GO:0019285">
    <property type="term" value="P:glycine betaine biosynthetic process from choline"/>
    <property type="evidence" value="ECO:0007669"/>
    <property type="project" value="UniProtKB-UniRule"/>
</dbReference>
<dbReference type="Gene3D" id="3.50.50.60">
    <property type="entry name" value="FAD/NAD(P)-binding domain"/>
    <property type="match status" value="1"/>
</dbReference>
<dbReference type="Gene3D" id="3.30.560.10">
    <property type="entry name" value="Glucose Oxidase, domain 3"/>
    <property type="match status" value="1"/>
</dbReference>
<dbReference type="HAMAP" id="MF_00750">
    <property type="entry name" value="Choline_dehydrogen"/>
    <property type="match status" value="1"/>
</dbReference>
<dbReference type="InterPro" id="IPR011533">
    <property type="entry name" value="BetA"/>
</dbReference>
<dbReference type="InterPro" id="IPR036188">
    <property type="entry name" value="FAD/NAD-bd_sf"/>
</dbReference>
<dbReference type="InterPro" id="IPR012132">
    <property type="entry name" value="GMC_OxRdtase"/>
</dbReference>
<dbReference type="InterPro" id="IPR000172">
    <property type="entry name" value="GMC_OxRdtase_N"/>
</dbReference>
<dbReference type="InterPro" id="IPR007867">
    <property type="entry name" value="GMC_OxRtase_C"/>
</dbReference>
<dbReference type="NCBIfam" id="TIGR01810">
    <property type="entry name" value="betA"/>
    <property type="match status" value="1"/>
</dbReference>
<dbReference type="NCBIfam" id="NF002550">
    <property type="entry name" value="PRK02106.1"/>
    <property type="match status" value="1"/>
</dbReference>
<dbReference type="PANTHER" id="PTHR11552:SF147">
    <property type="entry name" value="CHOLINE DEHYDROGENASE, MITOCHONDRIAL"/>
    <property type="match status" value="1"/>
</dbReference>
<dbReference type="PANTHER" id="PTHR11552">
    <property type="entry name" value="GLUCOSE-METHANOL-CHOLINE GMC OXIDOREDUCTASE"/>
    <property type="match status" value="1"/>
</dbReference>
<dbReference type="Pfam" id="PF05199">
    <property type="entry name" value="GMC_oxred_C"/>
    <property type="match status" value="1"/>
</dbReference>
<dbReference type="Pfam" id="PF00732">
    <property type="entry name" value="GMC_oxred_N"/>
    <property type="match status" value="1"/>
</dbReference>
<dbReference type="PIRSF" id="PIRSF000137">
    <property type="entry name" value="Alcohol_oxidase"/>
    <property type="match status" value="1"/>
</dbReference>
<dbReference type="SUPFAM" id="SSF54373">
    <property type="entry name" value="FAD-linked reductases, C-terminal domain"/>
    <property type="match status" value="1"/>
</dbReference>
<dbReference type="SUPFAM" id="SSF51905">
    <property type="entry name" value="FAD/NAD(P)-binding domain"/>
    <property type="match status" value="1"/>
</dbReference>
<dbReference type="PROSITE" id="PS00623">
    <property type="entry name" value="GMC_OXRED_1"/>
    <property type="match status" value="1"/>
</dbReference>
<dbReference type="PROSITE" id="PS00624">
    <property type="entry name" value="GMC_OXRED_2"/>
    <property type="match status" value="1"/>
</dbReference>
<keyword id="KW-0274">FAD</keyword>
<keyword id="KW-0285">Flavoprotein</keyword>
<keyword id="KW-0520">NAD</keyword>
<keyword id="KW-0560">Oxidoreductase</keyword>
<proteinExistence type="inferred from homology"/>
<organism>
    <name type="scientific">Escherichia coli O8 (strain IAI1)</name>
    <dbReference type="NCBI Taxonomy" id="585034"/>
    <lineage>
        <taxon>Bacteria</taxon>
        <taxon>Pseudomonadati</taxon>
        <taxon>Pseudomonadota</taxon>
        <taxon>Gammaproteobacteria</taxon>
        <taxon>Enterobacterales</taxon>
        <taxon>Enterobacteriaceae</taxon>
        <taxon>Escherichia</taxon>
    </lineage>
</organism>
<evidence type="ECO:0000255" key="1">
    <source>
        <dbReference type="HAMAP-Rule" id="MF_00750"/>
    </source>
</evidence>
<reference key="1">
    <citation type="journal article" date="2009" name="PLoS Genet.">
        <title>Organised genome dynamics in the Escherichia coli species results in highly diverse adaptive paths.</title>
        <authorList>
            <person name="Touchon M."/>
            <person name="Hoede C."/>
            <person name="Tenaillon O."/>
            <person name="Barbe V."/>
            <person name="Baeriswyl S."/>
            <person name="Bidet P."/>
            <person name="Bingen E."/>
            <person name="Bonacorsi S."/>
            <person name="Bouchier C."/>
            <person name="Bouvet O."/>
            <person name="Calteau A."/>
            <person name="Chiapello H."/>
            <person name="Clermont O."/>
            <person name="Cruveiller S."/>
            <person name="Danchin A."/>
            <person name="Diard M."/>
            <person name="Dossat C."/>
            <person name="Karoui M.E."/>
            <person name="Frapy E."/>
            <person name="Garry L."/>
            <person name="Ghigo J.M."/>
            <person name="Gilles A.M."/>
            <person name="Johnson J."/>
            <person name="Le Bouguenec C."/>
            <person name="Lescat M."/>
            <person name="Mangenot S."/>
            <person name="Martinez-Jehanne V."/>
            <person name="Matic I."/>
            <person name="Nassif X."/>
            <person name="Oztas S."/>
            <person name="Petit M.A."/>
            <person name="Pichon C."/>
            <person name="Rouy Z."/>
            <person name="Ruf C.S."/>
            <person name="Schneider D."/>
            <person name="Tourret J."/>
            <person name="Vacherie B."/>
            <person name="Vallenet D."/>
            <person name="Medigue C."/>
            <person name="Rocha E.P.C."/>
            <person name="Denamur E."/>
        </authorList>
    </citation>
    <scope>NUCLEOTIDE SEQUENCE [LARGE SCALE GENOMIC DNA]</scope>
    <source>
        <strain>IAI1</strain>
    </source>
</reference>
<feature type="chain" id="PRO_1000133328" description="Oxygen-dependent choline dehydrogenase">
    <location>
        <begin position="1"/>
        <end position="556"/>
    </location>
</feature>
<feature type="active site" description="Proton acceptor" evidence="1">
    <location>
        <position position="473"/>
    </location>
</feature>
<feature type="binding site" evidence="1">
    <location>
        <begin position="4"/>
        <end position="33"/>
    </location>
    <ligand>
        <name>FAD</name>
        <dbReference type="ChEBI" id="CHEBI:57692"/>
    </ligand>
</feature>
<accession>B7M2V5</accession>
<sequence>MQFDYIIIGAGSAGNVLATRLTEDPNTSVLLLEAGGPDYRFDFRTQMPAALAFPLQGKRYNWAYETEPEPFMNNRRMECGRGKGLGGSSLINGMCYIRGNALDLDNWAQEPGLENWSYLDCLPYYRKAETRDVGENDYHGGDGPVSVTTSKPGVNPLFEAMIEAGVQAGYPRTDDLNGYQQEGFGPMDRTVTPQGRRASTARGYLDQAKSRPNLTIRTHAMTDHIIFDGKRAVGVEWLEGDSTIPTRATANKEVLLCAGAIASPQILQRSGVGNAELLAEFDIPLVHELPGVGENLQDHLEMYLQYECKEPVSLYPALQWWNQPKIGAEWLFGGTGVGASNHFEAGGFIRSREEFAWPNIQYHFLPVAINYNGSNAVKEHGFQCHVGSMRSPSRGHVRIKSRDPHQHPAILFNYMSHEQDWQEFRDAIRITREIMHQPALDQYRGREISPGTECQTDEQLDEFVRNHAETAFHPCGTCKMGYDEMSVVDGEGRVHGLEGLRVVDASIMPQIITGNLNATTIMIGEKIADMIRGQEALPRSTAGYFVANGMPVRAKK</sequence>
<gene>
    <name evidence="1" type="primary">betA</name>
    <name type="ordered locus">ECIAI1_0308</name>
</gene>
<protein>
    <recommendedName>
        <fullName evidence="1">Oxygen-dependent choline dehydrogenase</fullName>
        <shortName evidence="1">CDH</shortName>
        <shortName evidence="1">CHD</shortName>
        <ecNumber evidence="1">1.1.99.1</ecNumber>
    </recommendedName>
    <alternativeName>
        <fullName evidence="1">Betaine aldehyde dehydrogenase</fullName>
        <shortName evidence="1">BADH</shortName>
        <ecNumber evidence="1">1.2.1.8</ecNumber>
    </alternativeName>
</protein>
<comment type="function">
    <text evidence="1">Involved in the biosynthesis of the osmoprotectant glycine betaine. Catalyzes the oxidation of choline to betaine aldehyde and betaine aldehyde to glycine betaine at the same rate.</text>
</comment>
<comment type="catalytic activity">
    <reaction evidence="1">
        <text>choline + A = betaine aldehyde + AH2</text>
        <dbReference type="Rhea" id="RHEA:17433"/>
        <dbReference type="ChEBI" id="CHEBI:13193"/>
        <dbReference type="ChEBI" id="CHEBI:15354"/>
        <dbReference type="ChEBI" id="CHEBI:15710"/>
        <dbReference type="ChEBI" id="CHEBI:17499"/>
        <dbReference type="EC" id="1.1.99.1"/>
    </reaction>
</comment>
<comment type="catalytic activity">
    <reaction evidence="1">
        <text>betaine aldehyde + NAD(+) + H2O = glycine betaine + NADH + 2 H(+)</text>
        <dbReference type="Rhea" id="RHEA:15305"/>
        <dbReference type="ChEBI" id="CHEBI:15377"/>
        <dbReference type="ChEBI" id="CHEBI:15378"/>
        <dbReference type="ChEBI" id="CHEBI:15710"/>
        <dbReference type="ChEBI" id="CHEBI:17750"/>
        <dbReference type="ChEBI" id="CHEBI:57540"/>
        <dbReference type="ChEBI" id="CHEBI:57945"/>
        <dbReference type="EC" id="1.2.1.8"/>
    </reaction>
</comment>
<comment type="cofactor">
    <cofactor evidence="1">
        <name>FAD</name>
        <dbReference type="ChEBI" id="CHEBI:57692"/>
    </cofactor>
</comment>
<comment type="pathway">
    <text evidence="1">Amine and polyamine biosynthesis; betaine biosynthesis via choline pathway; betaine aldehyde from choline (cytochrome c reductase route): step 1/1.</text>
</comment>
<comment type="similarity">
    <text evidence="1">Belongs to the GMC oxidoreductase family.</text>
</comment>